<proteinExistence type="inferred from homology"/>
<gene>
    <name evidence="1" type="primary">rplO</name>
    <name type="ordered locus">SaurJH9_2258</name>
</gene>
<dbReference type="EMBL" id="CP000703">
    <property type="protein sequence ID" value="ABQ50038.1"/>
    <property type="molecule type" value="Genomic_DNA"/>
</dbReference>
<dbReference type="RefSeq" id="WP_000766074.1">
    <property type="nucleotide sequence ID" value="NC_009487.1"/>
</dbReference>
<dbReference type="SMR" id="A5IV15"/>
<dbReference type="GeneID" id="98346543"/>
<dbReference type="KEGG" id="saj:SaurJH9_2258"/>
<dbReference type="HOGENOM" id="CLU_055188_4_2_9"/>
<dbReference type="GO" id="GO:0022625">
    <property type="term" value="C:cytosolic large ribosomal subunit"/>
    <property type="evidence" value="ECO:0007669"/>
    <property type="project" value="TreeGrafter"/>
</dbReference>
<dbReference type="GO" id="GO:0019843">
    <property type="term" value="F:rRNA binding"/>
    <property type="evidence" value="ECO:0007669"/>
    <property type="project" value="UniProtKB-UniRule"/>
</dbReference>
<dbReference type="GO" id="GO:0003735">
    <property type="term" value="F:structural constituent of ribosome"/>
    <property type="evidence" value="ECO:0007669"/>
    <property type="project" value="InterPro"/>
</dbReference>
<dbReference type="GO" id="GO:0006412">
    <property type="term" value="P:translation"/>
    <property type="evidence" value="ECO:0007669"/>
    <property type="project" value="UniProtKB-UniRule"/>
</dbReference>
<dbReference type="FunFam" id="3.100.10.10:FF:000004">
    <property type="entry name" value="50S ribosomal protein L15"/>
    <property type="match status" value="1"/>
</dbReference>
<dbReference type="Gene3D" id="3.100.10.10">
    <property type="match status" value="1"/>
</dbReference>
<dbReference type="HAMAP" id="MF_01341">
    <property type="entry name" value="Ribosomal_uL15"/>
    <property type="match status" value="1"/>
</dbReference>
<dbReference type="InterPro" id="IPR030878">
    <property type="entry name" value="Ribosomal_uL15"/>
</dbReference>
<dbReference type="InterPro" id="IPR021131">
    <property type="entry name" value="Ribosomal_uL15/eL18"/>
</dbReference>
<dbReference type="InterPro" id="IPR036227">
    <property type="entry name" value="Ribosomal_uL15/eL18_sf"/>
</dbReference>
<dbReference type="InterPro" id="IPR005749">
    <property type="entry name" value="Ribosomal_uL15_bac-type"/>
</dbReference>
<dbReference type="InterPro" id="IPR001196">
    <property type="entry name" value="Ribosomal_uL15_CS"/>
</dbReference>
<dbReference type="NCBIfam" id="TIGR01071">
    <property type="entry name" value="rplO_bact"/>
    <property type="match status" value="1"/>
</dbReference>
<dbReference type="PANTHER" id="PTHR12934">
    <property type="entry name" value="50S RIBOSOMAL PROTEIN L15"/>
    <property type="match status" value="1"/>
</dbReference>
<dbReference type="PANTHER" id="PTHR12934:SF11">
    <property type="entry name" value="LARGE RIBOSOMAL SUBUNIT PROTEIN UL15M"/>
    <property type="match status" value="1"/>
</dbReference>
<dbReference type="Pfam" id="PF00828">
    <property type="entry name" value="Ribosomal_L27A"/>
    <property type="match status" value="1"/>
</dbReference>
<dbReference type="SUPFAM" id="SSF52080">
    <property type="entry name" value="Ribosomal proteins L15p and L18e"/>
    <property type="match status" value="1"/>
</dbReference>
<dbReference type="PROSITE" id="PS00475">
    <property type="entry name" value="RIBOSOMAL_L15"/>
    <property type="match status" value="1"/>
</dbReference>
<evidence type="ECO:0000255" key="1">
    <source>
        <dbReference type="HAMAP-Rule" id="MF_01341"/>
    </source>
</evidence>
<evidence type="ECO:0000256" key="2">
    <source>
        <dbReference type="SAM" id="MobiDB-lite"/>
    </source>
</evidence>
<evidence type="ECO:0000305" key="3"/>
<protein>
    <recommendedName>
        <fullName evidence="1">Large ribosomal subunit protein uL15</fullName>
    </recommendedName>
    <alternativeName>
        <fullName evidence="3">50S ribosomal protein L15</fullName>
    </alternativeName>
</protein>
<name>RL15_STAA9</name>
<reference key="1">
    <citation type="submission" date="2007-05" db="EMBL/GenBank/DDBJ databases">
        <title>Complete sequence of chromosome of Staphylococcus aureus subsp. aureus JH9.</title>
        <authorList>
            <consortium name="US DOE Joint Genome Institute"/>
            <person name="Copeland A."/>
            <person name="Lucas S."/>
            <person name="Lapidus A."/>
            <person name="Barry K."/>
            <person name="Detter J.C."/>
            <person name="Glavina del Rio T."/>
            <person name="Hammon N."/>
            <person name="Israni S."/>
            <person name="Pitluck S."/>
            <person name="Chain P."/>
            <person name="Malfatti S."/>
            <person name="Shin M."/>
            <person name="Vergez L."/>
            <person name="Schmutz J."/>
            <person name="Larimer F."/>
            <person name="Land M."/>
            <person name="Hauser L."/>
            <person name="Kyrpides N."/>
            <person name="Kim E."/>
            <person name="Tomasz A."/>
            <person name="Richardson P."/>
        </authorList>
    </citation>
    <scope>NUCLEOTIDE SEQUENCE [LARGE SCALE GENOMIC DNA]</scope>
    <source>
        <strain>JH9</strain>
    </source>
</reference>
<comment type="function">
    <text evidence="1">Binds to the 23S rRNA.</text>
</comment>
<comment type="subunit">
    <text evidence="1">Part of the 50S ribosomal subunit.</text>
</comment>
<comment type="similarity">
    <text evidence="1">Belongs to the universal ribosomal protein uL15 family.</text>
</comment>
<feature type="chain" id="PRO_1000086735" description="Large ribosomal subunit protein uL15">
    <location>
        <begin position="1"/>
        <end position="146"/>
    </location>
</feature>
<feature type="region of interest" description="Disordered" evidence="2">
    <location>
        <begin position="1"/>
        <end position="54"/>
    </location>
</feature>
<feature type="compositionally biased region" description="Basic and acidic residues" evidence="2">
    <location>
        <begin position="1"/>
        <end position="18"/>
    </location>
</feature>
<feature type="compositionally biased region" description="Gly residues" evidence="2">
    <location>
        <begin position="42"/>
        <end position="52"/>
    </location>
</feature>
<keyword id="KW-0687">Ribonucleoprotein</keyword>
<keyword id="KW-0689">Ribosomal protein</keyword>
<keyword id="KW-0694">RNA-binding</keyword>
<keyword id="KW-0699">rRNA-binding</keyword>
<accession>A5IV15</accession>
<organism>
    <name type="scientific">Staphylococcus aureus (strain JH9)</name>
    <dbReference type="NCBI Taxonomy" id="359786"/>
    <lineage>
        <taxon>Bacteria</taxon>
        <taxon>Bacillati</taxon>
        <taxon>Bacillota</taxon>
        <taxon>Bacilli</taxon>
        <taxon>Bacillales</taxon>
        <taxon>Staphylococcaceae</taxon>
        <taxon>Staphylococcus</taxon>
    </lineage>
</organism>
<sequence>MKLHELKPAEGSRKERNRVGRGVATGNGKTSGRGHKGQKARSGGGVRPGFEGGQLPLFRRLPKRGFTNINRKEYAIVNLDQLNKFEDGTEVTPALLVESGVVKNEKSGIKILGNGSLDKKLTVKAHKFSASAAEAIDAKGGAHEVI</sequence>